<feature type="chain" id="PRO_0000093919" description="RNA polymerase sigma factor SigA">
    <location>
        <begin position="1"/>
        <end position="368"/>
    </location>
</feature>
<feature type="DNA-binding region" description="H-T-H motif" evidence="1">
    <location>
        <begin position="329"/>
        <end position="348"/>
    </location>
</feature>
<feature type="region of interest" description="Disordered" evidence="2">
    <location>
        <begin position="69"/>
        <end position="90"/>
    </location>
</feature>
<feature type="region of interest" description="Sigma-70 factor domain-2" evidence="1">
    <location>
        <begin position="135"/>
        <end position="205"/>
    </location>
</feature>
<feature type="region of interest" description="Sigma-70 factor domain-3" evidence="1">
    <location>
        <begin position="214"/>
        <end position="290"/>
    </location>
</feature>
<feature type="region of interest" description="Sigma-70 factor domain-4" evidence="1">
    <location>
        <begin position="303"/>
        <end position="356"/>
    </location>
</feature>
<feature type="short sequence motif" description="Interaction with polymerase core subunit RpoC">
    <location>
        <begin position="159"/>
        <end position="162"/>
    </location>
</feature>
<feature type="compositionally biased region" description="Basic and acidic residues" evidence="2">
    <location>
        <begin position="71"/>
        <end position="83"/>
    </location>
</feature>
<gene>
    <name evidence="1" type="primary">sigA</name>
    <name type="synonym">plaC</name>
    <name type="synonym">rpoD</name>
    <name type="ordered locus">MW1513</name>
</gene>
<comment type="function">
    <text evidence="1">Sigma factors are initiation factors that promote the attachment of RNA polymerase to specific initiation sites and are then released. This sigma factor is the primary sigma factor during exponential growth.</text>
</comment>
<comment type="subunit">
    <text evidence="1">Interacts transiently with the RNA polymerase catalytic core.</text>
</comment>
<comment type="subcellular location">
    <subcellularLocation>
        <location evidence="1">Cytoplasm</location>
    </subcellularLocation>
</comment>
<comment type="similarity">
    <text evidence="1">Belongs to the sigma-70 factor family. RpoD/SigA subfamily.</text>
</comment>
<sequence length="368" mass="42171">MSDNTVKIKKQTIDPTLTLEDVKKQLIEKGKKEGHLSHEEIAEKLQNFDIDSDQMDDFFDQLNDNDISLVNEKDSSDTDEKLNPSDLSAPPGVKINDPVRMYLKEIGRVNLLSAQEEIELAKRIEQGDEVAKSRLAEANLRLVVSIAKRYVGRGMLFLDLIQEGNMGLIKAVEKFDFNKGFKFSTYATWWIRQAITRAIADQARTIRIPVHMVETINKLIRVQRQLLQDLGRDPAPEEIGEEMDLPAEKVREILKIAQEPVSLETPIGEEDDSHLGDFIEDQEAQSPSDHAAYELLKEQLEDVLDTLTDREENVLRLRFGLDDGRTRTLEEVGKVFGVTRERIRQIEAKALRKLRHPSRSKRLKDFMD</sequence>
<keyword id="KW-0963">Cytoplasm</keyword>
<keyword id="KW-0238">DNA-binding</keyword>
<keyword id="KW-0731">Sigma factor</keyword>
<keyword id="KW-0804">Transcription</keyword>
<keyword id="KW-0805">Transcription regulation</keyword>
<accession>P0A0I9</accession>
<accession>P26766</accession>
<name>SIGA_STAAW</name>
<protein>
    <recommendedName>
        <fullName evidence="1">RNA polymerase sigma factor SigA</fullName>
    </recommendedName>
</protein>
<reference key="1">
    <citation type="journal article" date="2002" name="Lancet">
        <title>Genome and virulence determinants of high virulence community-acquired MRSA.</title>
        <authorList>
            <person name="Baba T."/>
            <person name="Takeuchi F."/>
            <person name="Kuroda M."/>
            <person name="Yuzawa H."/>
            <person name="Aoki K."/>
            <person name="Oguchi A."/>
            <person name="Nagai Y."/>
            <person name="Iwama N."/>
            <person name="Asano K."/>
            <person name="Naimi T."/>
            <person name="Kuroda H."/>
            <person name="Cui L."/>
            <person name="Yamamoto K."/>
            <person name="Hiramatsu K."/>
        </authorList>
    </citation>
    <scope>NUCLEOTIDE SEQUENCE [LARGE SCALE GENOMIC DNA]</scope>
    <source>
        <strain>MW2</strain>
    </source>
</reference>
<proteinExistence type="inferred from homology"/>
<organism>
    <name type="scientific">Staphylococcus aureus (strain MW2)</name>
    <dbReference type="NCBI Taxonomy" id="196620"/>
    <lineage>
        <taxon>Bacteria</taxon>
        <taxon>Bacillati</taxon>
        <taxon>Bacillota</taxon>
        <taxon>Bacilli</taxon>
        <taxon>Bacillales</taxon>
        <taxon>Staphylococcaceae</taxon>
        <taxon>Staphylococcus</taxon>
    </lineage>
</organism>
<dbReference type="EMBL" id="BA000033">
    <property type="protein sequence ID" value="BAB95378.1"/>
    <property type="molecule type" value="Genomic_DNA"/>
</dbReference>
<dbReference type="RefSeq" id="WP_001283055.1">
    <property type="nucleotide sequence ID" value="NC_003923.1"/>
</dbReference>
<dbReference type="SMR" id="P0A0I9"/>
<dbReference type="GeneID" id="98345932"/>
<dbReference type="KEGG" id="sam:MW1513"/>
<dbReference type="HOGENOM" id="CLU_014793_3_3_9"/>
<dbReference type="GO" id="GO:0005737">
    <property type="term" value="C:cytoplasm"/>
    <property type="evidence" value="ECO:0007669"/>
    <property type="project" value="UniProtKB-SubCell"/>
</dbReference>
<dbReference type="GO" id="GO:0003677">
    <property type="term" value="F:DNA binding"/>
    <property type="evidence" value="ECO:0007669"/>
    <property type="project" value="UniProtKB-UniRule"/>
</dbReference>
<dbReference type="GO" id="GO:0016987">
    <property type="term" value="F:sigma factor activity"/>
    <property type="evidence" value="ECO:0007669"/>
    <property type="project" value="UniProtKB-UniRule"/>
</dbReference>
<dbReference type="GO" id="GO:0006352">
    <property type="term" value="P:DNA-templated transcription initiation"/>
    <property type="evidence" value="ECO:0007669"/>
    <property type="project" value="UniProtKB-UniRule"/>
</dbReference>
<dbReference type="CDD" id="cd06171">
    <property type="entry name" value="Sigma70_r4"/>
    <property type="match status" value="1"/>
</dbReference>
<dbReference type="FunFam" id="1.10.10.10:FF:000002">
    <property type="entry name" value="RNA polymerase sigma factor SigA"/>
    <property type="match status" value="1"/>
</dbReference>
<dbReference type="FunFam" id="1.10.10.10:FF:000004">
    <property type="entry name" value="RNA polymerase sigma factor SigA"/>
    <property type="match status" value="1"/>
</dbReference>
<dbReference type="FunFam" id="1.10.601.10:FF:000001">
    <property type="entry name" value="RNA polymerase sigma factor SigA"/>
    <property type="match status" value="1"/>
</dbReference>
<dbReference type="Gene3D" id="1.10.601.10">
    <property type="entry name" value="RNA Polymerase Primary Sigma Factor"/>
    <property type="match status" value="2"/>
</dbReference>
<dbReference type="Gene3D" id="1.10.220.120">
    <property type="entry name" value="Sigma-70 factor, region 1.1"/>
    <property type="match status" value="1"/>
</dbReference>
<dbReference type="Gene3D" id="1.10.10.10">
    <property type="entry name" value="Winged helix-like DNA-binding domain superfamily/Winged helix DNA-binding domain"/>
    <property type="match status" value="2"/>
</dbReference>
<dbReference type="HAMAP" id="MF_00963">
    <property type="entry name" value="Sigma70_RpoD_SigA"/>
    <property type="match status" value="1"/>
</dbReference>
<dbReference type="InterPro" id="IPR014284">
    <property type="entry name" value="RNA_pol_sigma-70_dom"/>
</dbReference>
<dbReference type="InterPro" id="IPR000943">
    <property type="entry name" value="RNA_pol_sigma70"/>
</dbReference>
<dbReference type="InterPro" id="IPR009042">
    <property type="entry name" value="RNA_pol_sigma70_r1_2"/>
</dbReference>
<dbReference type="InterPro" id="IPR007627">
    <property type="entry name" value="RNA_pol_sigma70_r2"/>
</dbReference>
<dbReference type="InterPro" id="IPR007624">
    <property type="entry name" value="RNA_pol_sigma70_r3"/>
</dbReference>
<dbReference type="InterPro" id="IPR007630">
    <property type="entry name" value="RNA_pol_sigma70_r4"/>
</dbReference>
<dbReference type="InterPro" id="IPR007127">
    <property type="entry name" value="RNA_pol_sigma_70_r1_1"/>
</dbReference>
<dbReference type="InterPro" id="IPR042189">
    <property type="entry name" value="RNA_pol_sigma_70_r1_1_sf"/>
</dbReference>
<dbReference type="InterPro" id="IPR013325">
    <property type="entry name" value="RNA_pol_sigma_r2"/>
</dbReference>
<dbReference type="InterPro" id="IPR013324">
    <property type="entry name" value="RNA_pol_sigma_r3/r4-like"/>
</dbReference>
<dbReference type="InterPro" id="IPR012760">
    <property type="entry name" value="RNA_pol_sigma_RpoD_C"/>
</dbReference>
<dbReference type="InterPro" id="IPR050239">
    <property type="entry name" value="Sigma-70_RNA_pol_init_factors"/>
</dbReference>
<dbReference type="InterPro" id="IPR028630">
    <property type="entry name" value="Sigma70_RpoD"/>
</dbReference>
<dbReference type="InterPro" id="IPR036388">
    <property type="entry name" value="WH-like_DNA-bd_sf"/>
</dbReference>
<dbReference type="NCBIfam" id="NF006666">
    <property type="entry name" value="PRK09210.1"/>
    <property type="match status" value="1"/>
</dbReference>
<dbReference type="NCBIfam" id="TIGR02393">
    <property type="entry name" value="RpoD_Cterm"/>
    <property type="match status" value="1"/>
</dbReference>
<dbReference type="NCBIfam" id="TIGR02937">
    <property type="entry name" value="sigma70-ECF"/>
    <property type="match status" value="1"/>
</dbReference>
<dbReference type="PANTHER" id="PTHR30603">
    <property type="entry name" value="RNA POLYMERASE SIGMA FACTOR RPO"/>
    <property type="match status" value="1"/>
</dbReference>
<dbReference type="PANTHER" id="PTHR30603:SF60">
    <property type="entry name" value="RNA POLYMERASE SIGMA FACTOR RPOD"/>
    <property type="match status" value="1"/>
</dbReference>
<dbReference type="Pfam" id="PF03979">
    <property type="entry name" value="Sigma70_r1_1"/>
    <property type="match status" value="1"/>
</dbReference>
<dbReference type="Pfam" id="PF00140">
    <property type="entry name" value="Sigma70_r1_2"/>
    <property type="match status" value="1"/>
</dbReference>
<dbReference type="Pfam" id="PF04542">
    <property type="entry name" value="Sigma70_r2"/>
    <property type="match status" value="1"/>
</dbReference>
<dbReference type="Pfam" id="PF04539">
    <property type="entry name" value="Sigma70_r3"/>
    <property type="match status" value="1"/>
</dbReference>
<dbReference type="Pfam" id="PF04545">
    <property type="entry name" value="Sigma70_r4"/>
    <property type="match status" value="1"/>
</dbReference>
<dbReference type="PRINTS" id="PR00046">
    <property type="entry name" value="SIGMA70FCT"/>
</dbReference>
<dbReference type="SUPFAM" id="SSF88946">
    <property type="entry name" value="Sigma2 domain of RNA polymerase sigma factors"/>
    <property type="match status" value="1"/>
</dbReference>
<dbReference type="SUPFAM" id="SSF88659">
    <property type="entry name" value="Sigma3 and sigma4 domains of RNA polymerase sigma factors"/>
    <property type="match status" value="2"/>
</dbReference>
<dbReference type="PROSITE" id="PS00715">
    <property type="entry name" value="SIGMA70_1"/>
    <property type="match status" value="1"/>
</dbReference>
<dbReference type="PROSITE" id="PS00716">
    <property type="entry name" value="SIGMA70_2"/>
    <property type="match status" value="1"/>
</dbReference>
<evidence type="ECO:0000255" key="1">
    <source>
        <dbReference type="HAMAP-Rule" id="MF_00963"/>
    </source>
</evidence>
<evidence type="ECO:0000256" key="2">
    <source>
        <dbReference type="SAM" id="MobiDB-lite"/>
    </source>
</evidence>